<feature type="chain" id="PRO_1000020841" description="Protease HtpX">
    <location>
        <begin position="1"/>
        <end position="301"/>
    </location>
</feature>
<feature type="transmembrane region" description="Helical" evidence="1">
    <location>
        <begin position="4"/>
        <end position="24"/>
    </location>
</feature>
<feature type="transmembrane region" description="Helical" evidence="1">
    <location>
        <begin position="44"/>
        <end position="64"/>
    </location>
</feature>
<feature type="transmembrane region" description="Helical" evidence="1">
    <location>
        <begin position="165"/>
        <end position="185"/>
    </location>
</feature>
<feature type="transmembrane region" description="Helical" evidence="1">
    <location>
        <begin position="201"/>
        <end position="221"/>
    </location>
</feature>
<feature type="active site" evidence="1">
    <location>
        <position position="151"/>
    </location>
</feature>
<feature type="binding site" evidence="1">
    <location>
        <position position="150"/>
    </location>
    <ligand>
        <name>Zn(2+)</name>
        <dbReference type="ChEBI" id="CHEBI:29105"/>
        <note>catalytic</note>
    </ligand>
</feature>
<feature type="binding site" evidence="1">
    <location>
        <position position="154"/>
    </location>
    <ligand>
        <name>Zn(2+)</name>
        <dbReference type="ChEBI" id="CHEBI:29105"/>
        <note>catalytic</note>
    </ligand>
</feature>
<feature type="binding site" evidence="1">
    <location>
        <position position="227"/>
    </location>
    <ligand>
        <name>Zn(2+)</name>
        <dbReference type="ChEBI" id="CHEBI:29105"/>
        <note>catalytic</note>
    </ligand>
</feature>
<accession>Q0AAR8</accession>
<gene>
    <name evidence="1" type="primary">htpX</name>
    <name type="ordered locus">Mlg_0715</name>
</gene>
<comment type="cofactor">
    <cofactor evidence="1">
        <name>Zn(2+)</name>
        <dbReference type="ChEBI" id="CHEBI:29105"/>
    </cofactor>
    <text evidence="1">Binds 1 zinc ion per subunit.</text>
</comment>
<comment type="subcellular location">
    <subcellularLocation>
        <location evidence="1">Cell inner membrane</location>
        <topology evidence="1">Multi-pass membrane protein</topology>
    </subcellularLocation>
</comment>
<comment type="similarity">
    <text evidence="1">Belongs to the peptidase M48B family.</text>
</comment>
<dbReference type="EC" id="3.4.24.-" evidence="1"/>
<dbReference type="EMBL" id="CP000453">
    <property type="protein sequence ID" value="ABI56069.1"/>
    <property type="molecule type" value="Genomic_DNA"/>
</dbReference>
<dbReference type="RefSeq" id="WP_011628464.1">
    <property type="nucleotide sequence ID" value="NC_008340.1"/>
</dbReference>
<dbReference type="SMR" id="Q0AAR8"/>
<dbReference type="MEROPS" id="M48.002"/>
<dbReference type="KEGG" id="aeh:Mlg_0715"/>
<dbReference type="eggNOG" id="COG0501">
    <property type="taxonomic scope" value="Bacteria"/>
</dbReference>
<dbReference type="HOGENOM" id="CLU_042266_1_0_6"/>
<dbReference type="OrthoDB" id="15218at2"/>
<dbReference type="Proteomes" id="UP000001962">
    <property type="component" value="Chromosome"/>
</dbReference>
<dbReference type="GO" id="GO:0005886">
    <property type="term" value="C:plasma membrane"/>
    <property type="evidence" value="ECO:0007669"/>
    <property type="project" value="UniProtKB-SubCell"/>
</dbReference>
<dbReference type="GO" id="GO:0004222">
    <property type="term" value="F:metalloendopeptidase activity"/>
    <property type="evidence" value="ECO:0007669"/>
    <property type="project" value="UniProtKB-UniRule"/>
</dbReference>
<dbReference type="GO" id="GO:0008270">
    <property type="term" value="F:zinc ion binding"/>
    <property type="evidence" value="ECO:0007669"/>
    <property type="project" value="UniProtKB-UniRule"/>
</dbReference>
<dbReference type="GO" id="GO:0006508">
    <property type="term" value="P:proteolysis"/>
    <property type="evidence" value="ECO:0007669"/>
    <property type="project" value="UniProtKB-KW"/>
</dbReference>
<dbReference type="CDD" id="cd07335">
    <property type="entry name" value="M48B_HtpX_like"/>
    <property type="match status" value="1"/>
</dbReference>
<dbReference type="FunFam" id="3.30.2010.10:FF:000001">
    <property type="entry name" value="Protease HtpX"/>
    <property type="match status" value="1"/>
</dbReference>
<dbReference type="Gene3D" id="3.30.2010.10">
    <property type="entry name" value="Metalloproteases ('zincins'), catalytic domain"/>
    <property type="match status" value="1"/>
</dbReference>
<dbReference type="HAMAP" id="MF_00188">
    <property type="entry name" value="Pept_M48_protease_HtpX"/>
    <property type="match status" value="1"/>
</dbReference>
<dbReference type="InterPro" id="IPR050083">
    <property type="entry name" value="HtpX_protease"/>
</dbReference>
<dbReference type="InterPro" id="IPR022919">
    <property type="entry name" value="Pept_M48_protease_HtpX"/>
</dbReference>
<dbReference type="InterPro" id="IPR001915">
    <property type="entry name" value="Peptidase_M48"/>
</dbReference>
<dbReference type="NCBIfam" id="NF003965">
    <property type="entry name" value="PRK05457.1"/>
    <property type="match status" value="1"/>
</dbReference>
<dbReference type="PANTHER" id="PTHR43221">
    <property type="entry name" value="PROTEASE HTPX"/>
    <property type="match status" value="1"/>
</dbReference>
<dbReference type="PANTHER" id="PTHR43221:SF1">
    <property type="entry name" value="PROTEASE HTPX"/>
    <property type="match status" value="1"/>
</dbReference>
<dbReference type="Pfam" id="PF01435">
    <property type="entry name" value="Peptidase_M48"/>
    <property type="match status" value="1"/>
</dbReference>
<dbReference type="PROSITE" id="PS00142">
    <property type="entry name" value="ZINC_PROTEASE"/>
    <property type="match status" value="1"/>
</dbReference>
<protein>
    <recommendedName>
        <fullName evidence="1">Protease HtpX</fullName>
        <ecNumber evidence="1">3.4.24.-</ecNumber>
    </recommendedName>
    <alternativeName>
        <fullName evidence="1">Heat shock protein HtpX</fullName>
    </alternativeName>
</protein>
<sequence>MKRIGLFLLTNLAILVVLGVVLFILQAVFGVRTLDEAGVGLDYTGLLIIAAVIGFGGSFISLAMSKFIAKRMTGARVIEKPRSEAEQWLVDTVRRFARQEGIGMPEVAIYDAPDMNAFATGARRNNSLVAVSTGLLQSMTRDEAEAVIGHEIAHISNGDMVTLTLIQGVVNTFVVFFSRIIGHFVDRVVFKTEQGHGPAYFITSIFAQIVLGILASVIVMWFSRQREYRADAGGAKLAGRDKMIAALERLKRSVDQEHLPDQLEAFGINGNRGGGMKEWFMSHPPLDDRIAALKEGRHLRG</sequence>
<organism>
    <name type="scientific">Alkalilimnicola ehrlichii (strain ATCC BAA-1101 / DSM 17681 / MLHE-1)</name>
    <dbReference type="NCBI Taxonomy" id="187272"/>
    <lineage>
        <taxon>Bacteria</taxon>
        <taxon>Pseudomonadati</taxon>
        <taxon>Pseudomonadota</taxon>
        <taxon>Gammaproteobacteria</taxon>
        <taxon>Chromatiales</taxon>
        <taxon>Ectothiorhodospiraceae</taxon>
        <taxon>Alkalilimnicola</taxon>
    </lineage>
</organism>
<reference key="1">
    <citation type="submission" date="2006-08" db="EMBL/GenBank/DDBJ databases">
        <title>Complete sequence of Alkalilimnicola ehrilichei MLHE-1.</title>
        <authorList>
            <person name="Copeland A."/>
            <person name="Lucas S."/>
            <person name="Lapidus A."/>
            <person name="Barry K."/>
            <person name="Detter J.C."/>
            <person name="Glavina del Rio T."/>
            <person name="Hammon N."/>
            <person name="Israni S."/>
            <person name="Dalin E."/>
            <person name="Tice H."/>
            <person name="Pitluck S."/>
            <person name="Sims D."/>
            <person name="Brettin T."/>
            <person name="Bruce D."/>
            <person name="Han C."/>
            <person name="Tapia R."/>
            <person name="Gilna P."/>
            <person name="Schmutz J."/>
            <person name="Larimer F."/>
            <person name="Land M."/>
            <person name="Hauser L."/>
            <person name="Kyrpides N."/>
            <person name="Mikhailova N."/>
            <person name="Oremland R.S."/>
            <person name="Hoeft S.E."/>
            <person name="Switzer-Blum J."/>
            <person name="Kulp T."/>
            <person name="King G."/>
            <person name="Tabita R."/>
            <person name="Witte B."/>
            <person name="Santini J.M."/>
            <person name="Basu P."/>
            <person name="Hollibaugh J.T."/>
            <person name="Xie G."/>
            <person name="Stolz J.F."/>
            <person name="Richardson P."/>
        </authorList>
    </citation>
    <scope>NUCLEOTIDE SEQUENCE [LARGE SCALE GENOMIC DNA]</scope>
    <source>
        <strain>ATCC BAA-1101 / DSM 17681 / MLHE-1</strain>
    </source>
</reference>
<proteinExistence type="inferred from homology"/>
<name>HTPX_ALKEH</name>
<keyword id="KW-0997">Cell inner membrane</keyword>
<keyword id="KW-1003">Cell membrane</keyword>
<keyword id="KW-0378">Hydrolase</keyword>
<keyword id="KW-0472">Membrane</keyword>
<keyword id="KW-0479">Metal-binding</keyword>
<keyword id="KW-0482">Metalloprotease</keyword>
<keyword id="KW-0645">Protease</keyword>
<keyword id="KW-1185">Reference proteome</keyword>
<keyword id="KW-0812">Transmembrane</keyword>
<keyword id="KW-1133">Transmembrane helix</keyword>
<keyword id="KW-0862">Zinc</keyword>
<evidence type="ECO:0000255" key="1">
    <source>
        <dbReference type="HAMAP-Rule" id="MF_00188"/>
    </source>
</evidence>